<accession>B0YPP7</accession>
<comment type="function">
    <text evidence="1">Component of the cytochrome b6-f complex, which mediates electron transfer between photosystem II (PSII) and photosystem I (PSI), cyclic electron flow around PSI, and state transitions. PetG is required for either the stability or assembly of the cytochrome b6-f complex.</text>
</comment>
<comment type="subunit">
    <text evidence="1">The 4 large subunits of the cytochrome b6-f complex are cytochrome b6, subunit IV (17 kDa polypeptide, PetD), cytochrome f and the Rieske protein, while the 4 small subunits are PetG, PetL, PetM and PetN. The complex functions as a dimer.</text>
</comment>
<comment type="subcellular location">
    <subcellularLocation>
        <location evidence="2">Plastid membrane</location>
        <topology evidence="1">Single-pass membrane protein</topology>
    </subcellularLocation>
</comment>
<comment type="similarity">
    <text evidence="1">Belongs to the PetG family.</text>
</comment>
<comment type="caution">
    <text evidence="2">This organism being non-photosynthetic, the role of this protein is uncertain.</text>
</comment>
<protein>
    <recommendedName>
        <fullName evidence="1">Cytochrome b6-f complex subunit 5</fullName>
    </recommendedName>
    <alternativeName>
        <fullName evidence="1">Cytochrome b6-f complex subunit PetG</fullName>
    </alternativeName>
    <alternativeName>
        <fullName evidence="1">Cytochrome b6-f complex subunit V</fullName>
    </alternativeName>
</protein>
<reference key="1">
    <citation type="journal article" date="2008" name="Mol. Biol. Evol.">
        <title>Functional gene losses occur with minimal size reduction in the plastid genome of the parasitic liverwort Aneura mirabilis.</title>
        <authorList>
            <person name="Wickett N.J."/>
            <person name="Zhang Y."/>
            <person name="Hansen S.K."/>
            <person name="Roper J.M."/>
            <person name="Kuehl J.V."/>
            <person name="Plock S.A."/>
            <person name="Wolf P.G."/>
            <person name="dePamphilis C.W."/>
            <person name="Boore J.L."/>
            <person name="Goffinet B."/>
        </authorList>
    </citation>
    <scope>NUCLEOTIDE SEQUENCE [LARGE SCALE GENOMIC DNA]</scope>
</reference>
<evidence type="ECO:0000255" key="1">
    <source>
        <dbReference type="HAMAP-Rule" id="MF_00432"/>
    </source>
</evidence>
<evidence type="ECO:0000305" key="2"/>
<proteinExistence type="inferred from homology"/>
<geneLocation type="non-photosynthetic plastid"/>
<feature type="chain" id="PRO_0000355367" description="Cytochrome b6-f complex subunit 5">
    <location>
        <begin position="1"/>
        <end position="37"/>
    </location>
</feature>
<feature type="transmembrane region" description="Helical" evidence="1">
    <location>
        <begin position="5"/>
        <end position="25"/>
    </location>
</feature>
<name>PETG_ANEMR</name>
<dbReference type="EMBL" id="EU043314">
    <property type="protein sequence ID" value="ABS54494.1"/>
    <property type="molecule type" value="Genomic_DNA"/>
</dbReference>
<dbReference type="RefSeq" id="YP_001687233.1">
    <property type="nucleotide sequence ID" value="NC_010359.1"/>
</dbReference>
<dbReference type="SMR" id="B0YPP7"/>
<dbReference type="GeneID" id="5952212"/>
<dbReference type="GO" id="GO:0009512">
    <property type="term" value="C:cytochrome b6f complex"/>
    <property type="evidence" value="ECO:0007669"/>
    <property type="project" value="InterPro"/>
</dbReference>
<dbReference type="GO" id="GO:0042170">
    <property type="term" value="C:plastid membrane"/>
    <property type="evidence" value="ECO:0007669"/>
    <property type="project" value="UniProtKB-SubCell"/>
</dbReference>
<dbReference type="GO" id="GO:0042651">
    <property type="term" value="C:thylakoid membrane"/>
    <property type="evidence" value="ECO:0007669"/>
    <property type="project" value="UniProtKB-UniRule"/>
</dbReference>
<dbReference type="GO" id="GO:0045158">
    <property type="term" value="F:electron transporter, transferring electrons within cytochrome b6/f complex of photosystem II activity"/>
    <property type="evidence" value="ECO:0007669"/>
    <property type="project" value="UniProtKB-UniRule"/>
</dbReference>
<dbReference type="GO" id="GO:0017004">
    <property type="term" value="P:cytochrome complex assembly"/>
    <property type="evidence" value="ECO:0007669"/>
    <property type="project" value="UniProtKB-UniRule"/>
</dbReference>
<dbReference type="HAMAP" id="MF_00432">
    <property type="entry name" value="Cytb6_f_PetG"/>
    <property type="match status" value="1"/>
</dbReference>
<dbReference type="InterPro" id="IPR003683">
    <property type="entry name" value="Cyt_6/f_cplx_su5"/>
</dbReference>
<dbReference type="InterPro" id="IPR036099">
    <property type="entry name" value="Cyt_6/f_cplx_su5_sf"/>
</dbReference>
<dbReference type="Pfam" id="PF02529">
    <property type="entry name" value="PetG"/>
    <property type="match status" value="1"/>
</dbReference>
<dbReference type="PIRSF" id="PIRSF000034">
    <property type="entry name" value="Cyt_b6-f_V"/>
    <property type="match status" value="1"/>
</dbReference>
<dbReference type="SUPFAM" id="SSF103446">
    <property type="entry name" value="PetG subunit of the cytochrome b6f complex"/>
    <property type="match status" value="1"/>
</dbReference>
<sequence length="37" mass="4004">MVEALLSGIVPGLIPITLAGSFVIAYLQYRRGDQLDL</sequence>
<gene>
    <name evidence="1" type="primary">petG</name>
</gene>
<organism>
    <name type="scientific">Aneura mirabilis</name>
    <name type="common">Parasitic liverwort</name>
    <name type="synonym">Cryptothallus mirabilis</name>
    <dbReference type="NCBI Taxonomy" id="280810"/>
    <lineage>
        <taxon>Eukaryota</taxon>
        <taxon>Viridiplantae</taxon>
        <taxon>Streptophyta</taxon>
        <taxon>Embryophyta</taxon>
        <taxon>Marchantiophyta</taxon>
        <taxon>Jungermanniopsida</taxon>
        <taxon>Metzgeriidae</taxon>
        <taxon>Metzgeriales</taxon>
        <taxon>Aneuraceae</taxon>
        <taxon>Aneura</taxon>
    </lineage>
</organism>
<keyword id="KW-0249">Electron transport</keyword>
<keyword id="KW-0472">Membrane</keyword>
<keyword id="KW-0934">Plastid</keyword>
<keyword id="KW-0812">Transmembrane</keyword>
<keyword id="KW-1133">Transmembrane helix</keyword>
<keyword id="KW-0813">Transport</keyword>